<dbReference type="EMBL" id="AE017143">
    <property type="protein sequence ID" value="AAP95400.1"/>
    <property type="molecule type" value="Genomic_DNA"/>
</dbReference>
<dbReference type="RefSeq" id="WP_010944453.1">
    <property type="nucleotide sequence ID" value="NC_002940.2"/>
</dbReference>
<dbReference type="SMR" id="Q7VNQ2"/>
<dbReference type="STRING" id="233412.HD_0435"/>
<dbReference type="KEGG" id="hdu:HD_0435"/>
<dbReference type="eggNOG" id="COG0781">
    <property type="taxonomic scope" value="Bacteria"/>
</dbReference>
<dbReference type="HOGENOM" id="CLU_087843_4_1_6"/>
<dbReference type="OrthoDB" id="9789556at2"/>
<dbReference type="Proteomes" id="UP000001022">
    <property type="component" value="Chromosome"/>
</dbReference>
<dbReference type="GO" id="GO:0005829">
    <property type="term" value="C:cytosol"/>
    <property type="evidence" value="ECO:0007669"/>
    <property type="project" value="TreeGrafter"/>
</dbReference>
<dbReference type="GO" id="GO:0003723">
    <property type="term" value="F:RNA binding"/>
    <property type="evidence" value="ECO:0007669"/>
    <property type="project" value="UniProtKB-UniRule"/>
</dbReference>
<dbReference type="GO" id="GO:0006353">
    <property type="term" value="P:DNA-templated transcription termination"/>
    <property type="evidence" value="ECO:0007669"/>
    <property type="project" value="UniProtKB-UniRule"/>
</dbReference>
<dbReference type="GO" id="GO:0031564">
    <property type="term" value="P:transcription antitermination"/>
    <property type="evidence" value="ECO:0007669"/>
    <property type="project" value="UniProtKB-KW"/>
</dbReference>
<dbReference type="CDD" id="cd00619">
    <property type="entry name" value="Terminator_NusB"/>
    <property type="match status" value="1"/>
</dbReference>
<dbReference type="FunFam" id="1.10.940.10:FF:000001">
    <property type="entry name" value="Transcription antitermination factor NusB"/>
    <property type="match status" value="1"/>
</dbReference>
<dbReference type="Gene3D" id="1.10.940.10">
    <property type="entry name" value="NusB-like"/>
    <property type="match status" value="1"/>
</dbReference>
<dbReference type="HAMAP" id="MF_00073">
    <property type="entry name" value="NusB"/>
    <property type="match status" value="1"/>
</dbReference>
<dbReference type="InterPro" id="IPR035926">
    <property type="entry name" value="NusB-like_sf"/>
</dbReference>
<dbReference type="InterPro" id="IPR011605">
    <property type="entry name" value="NusB_fam"/>
</dbReference>
<dbReference type="InterPro" id="IPR006027">
    <property type="entry name" value="NusB_RsmB_TIM44"/>
</dbReference>
<dbReference type="NCBIfam" id="TIGR01951">
    <property type="entry name" value="nusB"/>
    <property type="match status" value="1"/>
</dbReference>
<dbReference type="PANTHER" id="PTHR11078:SF3">
    <property type="entry name" value="ANTITERMINATION NUSB DOMAIN-CONTAINING PROTEIN"/>
    <property type="match status" value="1"/>
</dbReference>
<dbReference type="PANTHER" id="PTHR11078">
    <property type="entry name" value="N UTILIZATION SUBSTANCE PROTEIN B-RELATED"/>
    <property type="match status" value="1"/>
</dbReference>
<dbReference type="Pfam" id="PF01029">
    <property type="entry name" value="NusB"/>
    <property type="match status" value="1"/>
</dbReference>
<dbReference type="SUPFAM" id="SSF48013">
    <property type="entry name" value="NusB-like"/>
    <property type="match status" value="1"/>
</dbReference>
<proteinExistence type="inferred from homology"/>
<comment type="function">
    <text evidence="1">Involved in transcription antitermination. Required for transcription of ribosomal RNA (rRNA) genes. Binds specifically to the boxA antiterminator sequence of the ribosomal RNA (rrn) operons.</text>
</comment>
<comment type="similarity">
    <text evidence="1">Belongs to the NusB family.</text>
</comment>
<name>NUSB_HAEDU</name>
<sequence>MKVSPRRRARECAVQALYSWYISQNSIEEVELAFVTDQDMKGVDLPYFRKLLRGTALYVEAIDHDIRPYLDRMENDVDPIERTILRLATYELKYELDVPYKVVINEGIEVAKVFGSDDSHKYINGILDKLAPALGRK</sequence>
<reference key="1">
    <citation type="submission" date="2003-06" db="EMBL/GenBank/DDBJ databases">
        <title>The complete genome sequence of Haemophilus ducreyi.</title>
        <authorList>
            <person name="Munson R.S. Jr."/>
            <person name="Ray W.C."/>
            <person name="Mahairas G."/>
            <person name="Sabo P."/>
            <person name="Mungur R."/>
            <person name="Johnson L."/>
            <person name="Nguyen D."/>
            <person name="Wang J."/>
            <person name="Forst C."/>
            <person name="Hood L."/>
        </authorList>
    </citation>
    <scope>NUCLEOTIDE SEQUENCE [LARGE SCALE GENOMIC DNA]</scope>
    <source>
        <strain>35000HP / ATCC 700724</strain>
    </source>
</reference>
<evidence type="ECO:0000255" key="1">
    <source>
        <dbReference type="HAMAP-Rule" id="MF_00073"/>
    </source>
</evidence>
<organism>
    <name type="scientific">Haemophilus ducreyi (strain 35000HP / ATCC 700724)</name>
    <dbReference type="NCBI Taxonomy" id="233412"/>
    <lineage>
        <taxon>Bacteria</taxon>
        <taxon>Pseudomonadati</taxon>
        <taxon>Pseudomonadota</taxon>
        <taxon>Gammaproteobacteria</taxon>
        <taxon>Pasteurellales</taxon>
        <taxon>Pasteurellaceae</taxon>
        <taxon>Haemophilus</taxon>
    </lineage>
</organism>
<keyword id="KW-1185">Reference proteome</keyword>
<keyword id="KW-0694">RNA-binding</keyword>
<keyword id="KW-0804">Transcription</keyword>
<keyword id="KW-0889">Transcription antitermination</keyword>
<keyword id="KW-0805">Transcription regulation</keyword>
<accession>Q7VNQ2</accession>
<feature type="chain" id="PRO_0000176542" description="Transcription antitermination protein NusB">
    <location>
        <begin position="1"/>
        <end position="137"/>
    </location>
</feature>
<protein>
    <recommendedName>
        <fullName evidence="1">Transcription antitermination protein NusB</fullName>
    </recommendedName>
    <alternativeName>
        <fullName evidence="1">Antitermination factor NusB</fullName>
    </alternativeName>
</protein>
<gene>
    <name evidence="1" type="primary">nusB</name>
    <name type="ordered locus">HD_0435</name>
</gene>